<reference key="1">
    <citation type="submission" date="2006-01" db="EMBL/GenBank/DDBJ databases">
        <title>Complete sequence of Novosphingobium aromaticivorans DSM 12444.</title>
        <authorList>
            <consortium name="US DOE Joint Genome Institute"/>
            <person name="Copeland A."/>
            <person name="Lucas S."/>
            <person name="Lapidus A."/>
            <person name="Barry K."/>
            <person name="Detter J.C."/>
            <person name="Glavina T."/>
            <person name="Hammon N."/>
            <person name="Israni S."/>
            <person name="Pitluck S."/>
            <person name="Chain P."/>
            <person name="Malfatti S."/>
            <person name="Shin M."/>
            <person name="Vergez L."/>
            <person name="Schmutz J."/>
            <person name="Larimer F."/>
            <person name="Land M."/>
            <person name="Kyrpides N."/>
            <person name="Ivanova N."/>
            <person name="Fredrickson J."/>
            <person name="Balkwill D."/>
            <person name="Romine M.F."/>
            <person name="Richardson P."/>
        </authorList>
    </citation>
    <scope>NUCLEOTIDE SEQUENCE [LARGE SCALE GENOMIC DNA]</scope>
    <source>
        <strain>ATCC 700278 / DSM 12444 / CCUG 56034 / CIP 105152 / NBRC 16084 / F199</strain>
    </source>
</reference>
<accession>Q2G9H1</accession>
<proteinExistence type="inferred from homology"/>
<keyword id="KW-0963">Cytoplasm</keyword>
<keyword id="KW-0378">Hydrolase</keyword>
<keyword id="KW-0546">Nucleotide metabolism</keyword>
<keyword id="KW-1185">Reference proteome</keyword>
<gene>
    <name type="ordered locus">Saro_1057</name>
</gene>
<sequence>MAGEASPVAQNPELVLASASPRRLELLSRLGVSPARVLATDLDESPLKGERPRDHAVRLAAEKARAAAALAPGCLVLAGDTVVGTGARILPKAEDEATARQCLALLSGRRHRVFSAVAVITPDGTLREALSETILRFKRLSDEEIEAYIAGGEWHGKAGGYAIQGSAEGFCAWLSGSHSGVVGLPLYETRRLLRAAGLDVR</sequence>
<name>NTPPA_NOVAD</name>
<feature type="chain" id="PRO_0000267361" description="dTTP/UTP pyrophosphatase">
    <location>
        <begin position="1"/>
        <end position="201"/>
    </location>
</feature>
<feature type="active site" description="Proton acceptor" evidence="1">
    <location>
        <position position="80"/>
    </location>
</feature>
<feature type="site" description="Important for substrate specificity" evidence="1">
    <location>
        <position position="22"/>
    </location>
</feature>
<feature type="site" description="Important for substrate specificity" evidence="1">
    <location>
        <position position="81"/>
    </location>
</feature>
<feature type="site" description="Important for substrate specificity" evidence="1">
    <location>
        <position position="164"/>
    </location>
</feature>
<dbReference type="EC" id="3.6.1.9" evidence="1"/>
<dbReference type="EMBL" id="CP000248">
    <property type="protein sequence ID" value="ABD25502.1"/>
    <property type="molecule type" value="Genomic_DNA"/>
</dbReference>
<dbReference type="RefSeq" id="WP_011444716.1">
    <property type="nucleotide sequence ID" value="NC_007794.1"/>
</dbReference>
<dbReference type="SMR" id="Q2G9H1"/>
<dbReference type="STRING" id="279238.Saro_1057"/>
<dbReference type="KEGG" id="nar:Saro_1057"/>
<dbReference type="eggNOG" id="COG0424">
    <property type="taxonomic scope" value="Bacteria"/>
</dbReference>
<dbReference type="HOGENOM" id="CLU_040416_2_0_5"/>
<dbReference type="Proteomes" id="UP000009134">
    <property type="component" value="Chromosome"/>
</dbReference>
<dbReference type="GO" id="GO:0005737">
    <property type="term" value="C:cytoplasm"/>
    <property type="evidence" value="ECO:0007669"/>
    <property type="project" value="UniProtKB-SubCell"/>
</dbReference>
<dbReference type="GO" id="GO:0036218">
    <property type="term" value="F:dTTP diphosphatase activity"/>
    <property type="evidence" value="ECO:0007669"/>
    <property type="project" value="RHEA"/>
</dbReference>
<dbReference type="GO" id="GO:0036221">
    <property type="term" value="F:UTP diphosphatase activity"/>
    <property type="evidence" value="ECO:0007669"/>
    <property type="project" value="RHEA"/>
</dbReference>
<dbReference type="GO" id="GO:0009117">
    <property type="term" value="P:nucleotide metabolic process"/>
    <property type="evidence" value="ECO:0007669"/>
    <property type="project" value="UniProtKB-KW"/>
</dbReference>
<dbReference type="CDD" id="cd00555">
    <property type="entry name" value="Maf"/>
    <property type="match status" value="1"/>
</dbReference>
<dbReference type="Gene3D" id="3.90.950.10">
    <property type="match status" value="1"/>
</dbReference>
<dbReference type="HAMAP" id="MF_00528">
    <property type="entry name" value="Maf"/>
    <property type="match status" value="1"/>
</dbReference>
<dbReference type="InterPro" id="IPR029001">
    <property type="entry name" value="ITPase-like_fam"/>
</dbReference>
<dbReference type="InterPro" id="IPR003697">
    <property type="entry name" value="Maf-like"/>
</dbReference>
<dbReference type="NCBIfam" id="TIGR00172">
    <property type="entry name" value="maf"/>
    <property type="match status" value="1"/>
</dbReference>
<dbReference type="PANTHER" id="PTHR43213">
    <property type="entry name" value="BIFUNCTIONAL DTTP/UTP PYROPHOSPHATASE/METHYLTRANSFERASE PROTEIN-RELATED"/>
    <property type="match status" value="1"/>
</dbReference>
<dbReference type="PANTHER" id="PTHR43213:SF5">
    <property type="entry name" value="BIFUNCTIONAL DTTP_UTP PYROPHOSPHATASE_METHYLTRANSFERASE PROTEIN-RELATED"/>
    <property type="match status" value="1"/>
</dbReference>
<dbReference type="Pfam" id="PF02545">
    <property type="entry name" value="Maf"/>
    <property type="match status" value="1"/>
</dbReference>
<dbReference type="PIRSF" id="PIRSF006305">
    <property type="entry name" value="Maf"/>
    <property type="match status" value="1"/>
</dbReference>
<dbReference type="SUPFAM" id="SSF52972">
    <property type="entry name" value="ITPase-like"/>
    <property type="match status" value="1"/>
</dbReference>
<organism>
    <name type="scientific">Novosphingobium aromaticivorans (strain ATCC 700278 / DSM 12444 / CCUG 56034 / CIP 105152 / NBRC 16084 / F199)</name>
    <dbReference type="NCBI Taxonomy" id="279238"/>
    <lineage>
        <taxon>Bacteria</taxon>
        <taxon>Pseudomonadati</taxon>
        <taxon>Pseudomonadota</taxon>
        <taxon>Alphaproteobacteria</taxon>
        <taxon>Sphingomonadales</taxon>
        <taxon>Sphingomonadaceae</taxon>
        <taxon>Novosphingobium</taxon>
    </lineage>
</organism>
<protein>
    <recommendedName>
        <fullName evidence="1">dTTP/UTP pyrophosphatase</fullName>
        <shortName evidence="1">dTTPase/UTPase</shortName>
        <ecNumber evidence="1">3.6.1.9</ecNumber>
    </recommendedName>
    <alternativeName>
        <fullName evidence="1">Nucleoside triphosphate pyrophosphatase</fullName>
    </alternativeName>
    <alternativeName>
        <fullName evidence="1">Nucleotide pyrophosphatase</fullName>
        <shortName evidence="1">Nucleotide PPase</shortName>
    </alternativeName>
</protein>
<evidence type="ECO:0000255" key="1">
    <source>
        <dbReference type="HAMAP-Rule" id="MF_00528"/>
    </source>
</evidence>
<comment type="function">
    <text evidence="1">Nucleoside triphosphate pyrophosphatase that hydrolyzes dTTP and UTP. May have a dual role in cell division arrest and in preventing the incorporation of modified nucleotides into cellular nucleic acids.</text>
</comment>
<comment type="catalytic activity">
    <reaction evidence="1">
        <text>dTTP + H2O = dTMP + diphosphate + H(+)</text>
        <dbReference type="Rhea" id="RHEA:28534"/>
        <dbReference type="ChEBI" id="CHEBI:15377"/>
        <dbReference type="ChEBI" id="CHEBI:15378"/>
        <dbReference type="ChEBI" id="CHEBI:33019"/>
        <dbReference type="ChEBI" id="CHEBI:37568"/>
        <dbReference type="ChEBI" id="CHEBI:63528"/>
        <dbReference type="EC" id="3.6.1.9"/>
    </reaction>
</comment>
<comment type="catalytic activity">
    <reaction evidence="1">
        <text>UTP + H2O = UMP + diphosphate + H(+)</text>
        <dbReference type="Rhea" id="RHEA:29395"/>
        <dbReference type="ChEBI" id="CHEBI:15377"/>
        <dbReference type="ChEBI" id="CHEBI:15378"/>
        <dbReference type="ChEBI" id="CHEBI:33019"/>
        <dbReference type="ChEBI" id="CHEBI:46398"/>
        <dbReference type="ChEBI" id="CHEBI:57865"/>
        <dbReference type="EC" id="3.6.1.9"/>
    </reaction>
</comment>
<comment type="cofactor">
    <cofactor evidence="1">
        <name>a divalent metal cation</name>
        <dbReference type="ChEBI" id="CHEBI:60240"/>
    </cofactor>
</comment>
<comment type="subcellular location">
    <subcellularLocation>
        <location evidence="1">Cytoplasm</location>
    </subcellularLocation>
</comment>
<comment type="similarity">
    <text evidence="1">Belongs to the Maf family. YhdE subfamily.</text>
</comment>